<organism evidence="8">
    <name type="scientific">Macrobrachium nipponense</name>
    <name type="common">Oriental river shrimp</name>
    <name type="synonym">Palaemon nipponensis</name>
    <dbReference type="NCBI Taxonomy" id="159736"/>
    <lineage>
        <taxon>Eukaryota</taxon>
        <taxon>Metazoa</taxon>
        <taxon>Ecdysozoa</taxon>
        <taxon>Arthropoda</taxon>
        <taxon>Crustacea</taxon>
        <taxon>Multicrustacea</taxon>
        <taxon>Malacostraca</taxon>
        <taxon>Eumalacostraca</taxon>
        <taxon>Eucarida</taxon>
        <taxon>Decapoda</taxon>
        <taxon>Pleocyemata</taxon>
        <taxon>Caridea</taxon>
        <taxon>Palaemonoidea</taxon>
        <taxon>Palaemonidae</taxon>
        <taxon>Macrobrachium</taxon>
    </lineage>
</organism>
<proteinExistence type="evidence at transcript level"/>
<evidence type="ECO:0000250" key="1">
    <source>
        <dbReference type="UniProtKB" id="Q63450"/>
    </source>
</evidence>
<evidence type="ECO:0000255" key="2">
    <source>
        <dbReference type="PROSITE-ProRule" id="PRU00159"/>
    </source>
</evidence>
<evidence type="ECO:0000256" key="3">
    <source>
        <dbReference type="SAM" id="MobiDB-lite"/>
    </source>
</evidence>
<evidence type="ECO:0000269" key="4">
    <source>
    </source>
</evidence>
<evidence type="ECO:0000303" key="5">
    <source>
    </source>
</evidence>
<evidence type="ECO:0000305" key="6"/>
<evidence type="ECO:0000305" key="7">
    <source>
    </source>
</evidence>
<evidence type="ECO:0000312" key="8">
    <source>
        <dbReference type="EMBL" id="AHG30903.1"/>
    </source>
</evidence>
<comment type="function">
    <text evidence="1 7">Calcium/calmodulin-dependent protein kinase that operates in the calcium-triggered CaMKK-CaMK1 signaling cascade and, upon calcium influx, regulates transcription activators activity, cell cycle, hormone production, cell differentiation, actin filament organization and neurite outgrowth (By similarity). Involved in molting (Probable).</text>
</comment>
<comment type="catalytic activity">
    <reaction evidence="1">
        <text>L-seryl-[protein] + ATP = O-phospho-L-seryl-[protein] + ADP + H(+)</text>
        <dbReference type="Rhea" id="RHEA:17989"/>
        <dbReference type="Rhea" id="RHEA-COMP:9863"/>
        <dbReference type="Rhea" id="RHEA-COMP:11604"/>
        <dbReference type="ChEBI" id="CHEBI:15378"/>
        <dbReference type="ChEBI" id="CHEBI:29999"/>
        <dbReference type="ChEBI" id="CHEBI:30616"/>
        <dbReference type="ChEBI" id="CHEBI:83421"/>
        <dbReference type="ChEBI" id="CHEBI:456216"/>
        <dbReference type="EC" id="2.7.11.17"/>
    </reaction>
</comment>
<comment type="catalytic activity">
    <reaction evidence="1">
        <text>L-threonyl-[protein] + ATP = O-phospho-L-threonyl-[protein] + ADP + H(+)</text>
        <dbReference type="Rhea" id="RHEA:46608"/>
        <dbReference type="Rhea" id="RHEA-COMP:11060"/>
        <dbReference type="Rhea" id="RHEA-COMP:11605"/>
        <dbReference type="ChEBI" id="CHEBI:15378"/>
        <dbReference type="ChEBI" id="CHEBI:30013"/>
        <dbReference type="ChEBI" id="CHEBI:30616"/>
        <dbReference type="ChEBI" id="CHEBI:61977"/>
        <dbReference type="ChEBI" id="CHEBI:456216"/>
        <dbReference type="EC" id="2.7.11.17"/>
    </reaction>
</comment>
<comment type="activity regulation">
    <text evidence="1">Activated by Ca(2+)/calmodulin. Binding of calmodulin results in conformational change that relieves intrasteric autoinhibition.</text>
</comment>
<comment type="tissue specificity">
    <text evidence="4">Highly expressed in hepatopancreas and to a lesser extent in gills. Low expression in hemocytes, testis, ovary, heart, eyestalk, muscle and epidermis.</text>
</comment>
<comment type="developmental stage">
    <text evidence="4">Higher expression level in the premolt stage in hepatopancreas (2.7-fold), muscle (5.2-fold) and epidermis (2.3-fold) compared to the intermolt stage. Expression is down-regulated in the postmolt stage in hepatopancreas and muscle, but remains high in epidermis.</text>
</comment>
<comment type="induction">
    <text evidence="4">During molting and in response to eyestalk ablation.</text>
</comment>
<comment type="domain">
    <text evidence="1">The autoinhibitory domain overlaps with the calmodulin binding region and interacts in the inactive folded state with the catalytic domain as a pseudosubstrate.</text>
</comment>
<comment type="similarity">
    <text evidence="6">Belongs to the protein kinase superfamily. CAMK Ser/Thr protein kinase family. CaMK subfamily.</text>
</comment>
<dbReference type="EC" id="2.7.11.17" evidence="1"/>
<dbReference type="EMBL" id="KF469224">
    <property type="protein sequence ID" value="AHG30903.1"/>
    <property type="molecule type" value="mRNA"/>
</dbReference>
<dbReference type="SMR" id="W0LYS5"/>
<dbReference type="GO" id="GO:0005524">
    <property type="term" value="F:ATP binding"/>
    <property type="evidence" value="ECO:0007669"/>
    <property type="project" value="UniProtKB-KW"/>
</dbReference>
<dbReference type="GO" id="GO:0004683">
    <property type="term" value="F:calcium/calmodulin-dependent protein kinase activity"/>
    <property type="evidence" value="ECO:0000250"/>
    <property type="project" value="UniProtKB"/>
</dbReference>
<dbReference type="GO" id="GO:0005516">
    <property type="term" value="F:calmodulin binding"/>
    <property type="evidence" value="ECO:0007669"/>
    <property type="project" value="UniProtKB-KW"/>
</dbReference>
<dbReference type="GO" id="GO:0106310">
    <property type="term" value="F:protein serine kinase activity"/>
    <property type="evidence" value="ECO:0007669"/>
    <property type="project" value="RHEA"/>
</dbReference>
<dbReference type="GO" id="GO:0022404">
    <property type="term" value="P:molting cycle process"/>
    <property type="evidence" value="ECO:0000270"/>
    <property type="project" value="UniProtKB"/>
</dbReference>
<dbReference type="CDD" id="cd14083">
    <property type="entry name" value="STKc_CaMKI"/>
    <property type="match status" value="1"/>
</dbReference>
<dbReference type="FunFam" id="3.30.200.20:FF:000531">
    <property type="entry name" value="Calcium/calmodulin-dependent protein kinase type"/>
    <property type="match status" value="1"/>
</dbReference>
<dbReference type="FunFam" id="1.10.510.10:FF:000026">
    <property type="entry name" value="Calcium/calmodulin-dependent protein kinase type 1"/>
    <property type="match status" value="1"/>
</dbReference>
<dbReference type="Gene3D" id="3.30.200.20">
    <property type="entry name" value="Phosphorylase Kinase, domain 1"/>
    <property type="match status" value="1"/>
</dbReference>
<dbReference type="Gene3D" id="1.10.510.10">
    <property type="entry name" value="Transferase(Phosphotransferase) domain 1"/>
    <property type="match status" value="1"/>
</dbReference>
<dbReference type="InterPro" id="IPR011009">
    <property type="entry name" value="Kinase-like_dom_sf"/>
</dbReference>
<dbReference type="InterPro" id="IPR000719">
    <property type="entry name" value="Prot_kinase_dom"/>
</dbReference>
<dbReference type="InterPro" id="IPR017441">
    <property type="entry name" value="Protein_kinase_ATP_BS"/>
</dbReference>
<dbReference type="InterPro" id="IPR008271">
    <property type="entry name" value="Ser/Thr_kinase_AS"/>
</dbReference>
<dbReference type="PANTHER" id="PTHR24347">
    <property type="entry name" value="SERINE/THREONINE-PROTEIN KINASE"/>
    <property type="match status" value="1"/>
</dbReference>
<dbReference type="Pfam" id="PF00069">
    <property type="entry name" value="Pkinase"/>
    <property type="match status" value="1"/>
</dbReference>
<dbReference type="SMART" id="SM00220">
    <property type="entry name" value="S_TKc"/>
    <property type="match status" value="1"/>
</dbReference>
<dbReference type="SUPFAM" id="SSF56112">
    <property type="entry name" value="Protein kinase-like (PK-like)"/>
    <property type="match status" value="1"/>
</dbReference>
<dbReference type="PROSITE" id="PS00107">
    <property type="entry name" value="PROTEIN_KINASE_ATP"/>
    <property type="match status" value="1"/>
</dbReference>
<dbReference type="PROSITE" id="PS50011">
    <property type="entry name" value="PROTEIN_KINASE_DOM"/>
    <property type="match status" value="1"/>
</dbReference>
<dbReference type="PROSITE" id="PS00108">
    <property type="entry name" value="PROTEIN_KINASE_ST"/>
    <property type="match status" value="1"/>
</dbReference>
<name>CAMKI_MACNP</name>
<gene>
    <name evidence="8" type="primary">CaMKI</name>
</gene>
<protein>
    <recommendedName>
        <fullName evidence="6">Calcium/calmodulin-dependent protein kinase type 1</fullName>
        <ecNumber evidence="1">2.7.11.17</ecNumber>
    </recommendedName>
    <alternativeName>
        <fullName evidence="6">CaM kinase I</fullName>
        <shortName evidence="5">MnCaMKI</shortName>
    </alternativeName>
</protein>
<accession>W0LYS5</accession>
<sequence>MPLFGSKKETAKKSSKKDKDEGKMPAVEDKYILKDLLGTGAFSQVRLAEVKEDPSRVVAIKIIDKKALKGKEDSLENEIRVLRRLQHPNIVQLMETYEDREHVYLIIELVTGGELFDRIVEKGSYTEKDASDLIRQVLEAVDYMHDQGVVHRDLKPENLLYYSPDEDSKIMISDFGLSKMEDSGIMATACGTPGYVAPEVLAQKPYGKAVDVWSIGVIAYILLCGYPPFYDENDANLFAQILKGEFEFDSPYWDEISESAKDFIRQLMCVDVEKRYTCKQALGHPWISGNAASTENIHSSVSEQLKKNFAKSRWRQAYHATAVIRQMRLFATKQVIVRRKLSESQ</sequence>
<reference evidence="8" key="1">
    <citation type="journal article" date="2014" name="Gene">
        <title>Calcium-calmodulin dependent protein kinase I from Macrobrachium nipponense: cDNA cloning and involvement in molting.</title>
        <authorList>
            <person name="Shen H."/>
            <person name="Hu Y."/>
            <person name="Zhang Y."/>
            <person name="Zhou X."/>
            <person name="Xu Z."/>
        </authorList>
    </citation>
    <scope>NUCLEOTIDE SEQUENCE [MRNA]</scope>
    <scope>TISSUE SPECIFICITY</scope>
    <scope>DEVELOPMENTAL STAGE</scope>
    <scope>INDUCTION</scope>
    <scope>PHYLOGENETIC ANALYSIS</scope>
    <source>
        <tissue evidence="5">Hepatopancreas</tissue>
    </source>
</reference>
<feature type="chain" id="PRO_0000439089" description="Calcium/calmodulin-dependent protein kinase type 1">
    <location>
        <begin position="1"/>
        <end position="345"/>
    </location>
</feature>
<feature type="domain" description="Protein kinase" evidence="2">
    <location>
        <begin position="31"/>
        <end position="287"/>
    </location>
</feature>
<feature type="region of interest" description="Disordered" evidence="3">
    <location>
        <begin position="1"/>
        <end position="23"/>
    </location>
</feature>
<feature type="region of interest" description="Autoinhibitory domain" evidence="1">
    <location>
        <begin position="287"/>
        <end position="327"/>
    </location>
</feature>
<feature type="region of interest" description="Calmodulin-binding" evidence="1">
    <location>
        <begin position="307"/>
        <end position="328"/>
    </location>
</feature>
<feature type="active site" description="Proton acceptor" evidence="2">
    <location>
        <position position="153"/>
    </location>
</feature>
<feature type="binding site" evidence="2">
    <location>
        <begin position="37"/>
        <end position="45"/>
    </location>
    <ligand>
        <name>ATP</name>
        <dbReference type="ChEBI" id="CHEBI:30616"/>
    </ligand>
</feature>
<feature type="binding site" evidence="2">
    <location>
        <position position="61"/>
    </location>
    <ligand>
        <name>ATP</name>
        <dbReference type="ChEBI" id="CHEBI:30616"/>
    </ligand>
</feature>
<keyword id="KW-0021">Allosteric enzyme</keyword>
<keyword id="KW-0067">ATP-binding</keyword>
<keyword id="KW-0112">Calmodulin-binding</keyword>
<keyword id="KW-0418">Kinase</keyword>
<keyword id="KW-0547">Nucleotide-binding</keyword>
<keyword id="KW-0723">Serine/threonine-protein kinase</keyword>
<keyword id="KW-0808">Transferase</keyword>